<accession>Q16513</accession>
<accession>B4DQ21</accession>
<accession>B4DTP5</accession>
<accession>B4DVG1</accession>
<accession>D3DT24</accession>
<accession>Q08AF4</accession>
<accession>Q9H1W4</accession>
<comment type="function">
    <text evidence="10 13 15 16 17 18 19 21 22 23 24 25">PKC-related serine/threonine-protein kinase and Rho/Rac effector protein that participates in specific signal transduction responses in the cell. Plays a role in the regulation of cell cycle progression, actin cytoskeleton assembly, cell migration, cell adhesion, tumor cell invasion and transcription activation signaling processes. Phosphorylates CTTN in hyaluronan-induced astrocytes and hence decreases CTTN ability to associate with filamentous actin. Phosphorylates HDAC5, therefore lead to impair HDAC5 import. Direct RhoA target required for the regulation of the maturation of primordial junctions into apical junction formation in bronchial epithelial cells. Required for G2/M phases of the cell cycle progression and abscission during cytokinesis in a ECT2-dependent manner. Stimulates FYN kinase activity that is required for establishment of skin cell-cell adhesion during keratinocytes differentiation. Regulates epithelial bladder cells speed and direction of movement during cell migration and tumor cell invasion. Inhibits Akt pro-survival-induced kinase activity. Mediates Rho protein-induced transcriptional activation via the c-fos serum response factor (SRF). Involved in the negative regulation of ciliogenesis (PubMed:27104747).</text>
</comment>
<comment type="function">
    <text evidence="18">(Microbial infection) Phosphorylates HCV NS5B leading to stimulation of HCV RNA replication.</text>
</comment>
<comment type="catalytic activity">
    <reaction>
        <text>L-seryl-[protein] + ATP = O-phospho-L-seryl-[protein] + ADP + H(+)</text>
        <dbReference type="Rhea" id="RHEA:17989"/>
        <dbReference type="Rhea" id="RHEA-COMP:9863"/>
        <dbReference type="Rhea" id="RHEA-COMP:11604"/>
        <dbReference type="ChEBI" id="CHEBI:15378"/>
        <dbReference type="ChEBI" id="CHEBI:29999"/>
        <dbReference type="ChEBI" id="CHEBI:30616"/>
        <dbReference type="ChEBI" id="CHEBI:83421"/>
        <dbReference type="ChEBI" id="CHEBI:456216"/>
        <dbReference type="EC" id="2.7.11.13"/>
    </reaction>
</comment>
<comment type="catalytic activity">
    <reaction>
        <text>L-threonyl-[protein] + ATP = O-phospho-L-threonyl-[protein] + ADP + H(+)</text>
        <dbReference type="Rhea" id="RHEA:46608"/>
        <dbReference type="Rhea" id="RHEA-COMP:11060"/>
        <dbReference type="Rhea" id="RHEA-COMP:11605"/>
        <dbReference type="ChEBI" id="CHEBI:15378"/>
        <dbReference type="ChEBI" id="CHEBI:30013"/>
        <dbReference type="ChEBI" id="CHEBI:30616"/>
        <dbReference type="ChEBI" id="CHEBI:61977"/>
        <dbReference type="ChEBI" id="CHEBI:456216"/>
        <dbReference type="EC" id="2.7.11.13"/>
    </reaction>
</comment>
<comment type="activity regulation">
    <text evidence="13 20 26">Kinase activity is activated upon binding to GTP-bound Rhoa/Rac1 GTPases. Activated by caspase-3 (CASP3) cleavage during apoptosis. Activated by lipids, particularly cardiolipin and to a lesser extent by other acidic phospholipids and unsaturated fatty acids. Two specific sites, Thr-816 (activation loop of the kinase domain) and Thr-958 (turn motif), need to be phosphorylated for its full activation.</text>
</comment>
<comment type="biophysicochemical properties">
    <kinetics>
        <KM evidence="21">15.83 uM for HDAC5</KM>
    </kinetics>
</comment>
<comment type="subunit">
    <text evidence="2 9 10 11 12 13 14 16 17 18 20 22 24 25">Interacts (via the REM repeats) with RHOA (GTP-bound form preferentially) and interacts (via the REM repeats) with RAC1 (GTP-bound form preferentially); the interactions induce its autophosphorylation (PubMed:20974804, PubMed:9121475). Interacts with RHOC (PubMed:20974804). Interacts with NCK1 and NCK2 (PubMed:10026169). Interacts with NCK1 (via SH3 domains) (By similarity). Interacts with CD44 (PubMed:15123640). Interacts (via C-terminal kinase domain) with PDPK1; the interaction stimulates PDPK1 kinase activity (PubMed:10226025, PubMed:10792047, PubMed:11781095, PubMed:18835241). Interacts with MAP3K2; the interaction activates PRK2 kinase activity in a MAP3K2-independent kinase activity (PubMed:10818102). Interacts (via C-terminal domain) with AKT1; the interaction occurs with the C-terminal cleavage product of PRK2 in apoptotic cells (PubMed:10926925). Interacts (via C-terminus) with PTPN13 (via PDZ 3 domain) (PubMed:11356191). Interacts with CDK10 (PubMed:27104747).</text>
</comment>
<comment type="subunit">
    <text evidence="18">(Microbial infection) Interacts with HCV NS5B (via N-terminal finger domain).</text>
</comment>
<comment type="interaction">
    <interactant intactId="EBI-2511350">
        <id>Q16513</id>
    </interactant>
    <interactant intactId="EBI-1789926">
        <id>P41208</id>
        <label>CETN2</label>
    </interactant>
    <organismsDiffer>false</organismsDiffer>
    <experiments>3</experiments>
</comment>
<comment type="interaction">
    <interactant intactId="EBI-2511350">
        <id>Q16513</id>
    </interactant>
    <interactant intactId="EBI-7016221">
        <id>Q15118</id>
        <label>PDK1</label>
    </interactant>
    <organismsDiffer>false</organismsDiffer>
    <experiments>6</experiments>
</comment>
<comment type="interaction">
    <interactant intactId="EBI-2511350">
        <id>Q16513</id>
    </interactant>
    <interactant intactId="EBI-10006231">
        <id>PRO_0000278753</id>
        <dbReference type="UniProtKB" id="O92972"/>
    </interactant>
    <organismsDiffer>true</organismsDiffer>
    <experiments>7</experiments>
</comment>
<comment type="subcellular location">
    <subcellularLocation>
        <location evidence="14 19">Cytoplasm</location>
    </subcellularLocation>
    <subcellularLocation>
        <location evidence="14">Nucleus</location>
    </subcellularLocation>
    <subcellularLocation>
        <location evidence="2">Membrane</location>
    </subcellularLocation>
    <subcellularLocation>
        <location evidence="14">Cell projection</location>
        <location evidence="14">Lamellipodium</location>
    </subcellularLocation>
    <subcellularLocation>
        <location evidence="14">Cytoplasm</location>
        <location evidence="14">Cytoskeleton</location>
    </subcellularLocation>
    <subcellularLocation>
        <location evidence="19">Cleavage furrow</location>
    </subcellularLocation>
    <subcellularLocation>
        <location evidence="19">Midbody</location>
    </subcellularLocation>
    <subcellularLocation>
        <location evidence="22">Cell junction</location>
    </subcellularLocation>
    <text evidence="14 19">Colocalizes with PTPN13 in lamellipodia-like structures, regions of large actin turnover. Accumulates during telophase at the cleavage furrow and concentrates finally around the midbody in cytokinesis. Recruited to nascent cell-cell contacts at the apical surface of cells. In the course of viral infection, colocalizes with HCV NS5B at perinuclear region in the cytoplasm.</text>
</comment>
<comment type="alternative products">
    <event type="alternative splicing"/>
    <isoform>
        <id>Q16513-1</id>
        <name>1</name>
        <sequence type="displayed"/>
    </isoform>
    <isoform>
        <id>Q16513-2</id>
        <name>2</name>
        <sequence type="described" ref="VSP_042183"/>
    </isoform>
    <isoform>
        <id>Q16513-3</id>
        <name>3</name>
        <sequence type="described" ref="VSP_042184"/>
    </isoform>
    <isoform>
        <id>Q16513-4</id>
        <name>4</name>
        <sequence type="described" ref="VSP_042181"/>
    </isoform>
    <isoform>
        <id>Q16513-5</id>
        <name>5</name>
        <sequence type="described" ref="VSP_042180 VSP_042182"/>
    </isoform>
</comment>
<comment type="tissue specificity">
    <text evidence="9 23">Ubiquitous. Expressed in numerous tumor cell lines, especially in bladder tumor cells.</text>
</comment>
<comment type="induction">
    <text evidence="15">Up-regulated during keratinocyte differentiation.</text>
</comment>
<comment type="domain">
    <text>The N-terminal regioninterferes with the interaction between AKT1 and the C-terminal regionof PKN2.</text>
</comment>
<comment type="domain">
    <text>The C1 domain does not bind the diacylglycerol (DAG).</text>
</comment>
<comment type="domain">
    <text>The apoptotic C-terminal cleavage product inhibits EGF-induced kinase activity of AKT1 phosphorylation at 'Thr-308' and 'Ser-473' sites, PDPK1 autophosphorylation and kinases PRKCD and PRKCZ phosphorylations.</text>
</comment>
<comment type="PTM">
    <text evidence="11 19 24">Autophosphorylated. Phosphorylated during mitosis. Phosphorylated by CDK10 (PubMed:27104747).</text>
</comment>
<comment type="PTM">
    <text evidence="1 26">Activated by limited proteolysis with trypsin (By similarity). Proteolytically cleaved by caspase-3 during the induction of apoptotic cell death.</text>
</comment>
<comment type="similarity">
    <text evidence="29">Belongs to the protein kinase superfamily. AGC Ser/Thr protein kinase family. PKC subfamily.</text>
</comment>
<organism>
    <name type="scientific">Homo sapiens</name>
    <name type="common">Human</name>
    <dbReference type="NCBI Taxonomy" id="9606"/>
    <lineage>
        <taxon>Eukaryota</taxon>
        <taxon>Metazoa</taxon>
        <taxon>Chordata</taxon>
        <taxon>Craniata</taxon>
        <taxon>Vertebrata</taxon>
        <taxon>Euteleostomi</taxon>
        <taxon>Mammalia</taxon>
        <taxon>Eutheria</taxon>
        <taxon>Euarchontoglires</taxon>
        <taxon>Primates</taxon>
        <taxon>Haplorrhini</taxon>
        <taxon>Catarrhini</taxon>
        <taxon>Hominidae</taxon>
        <taxon>Homo</taxon>
    </lineage>
</organism>
<sequence>MASNPERGEILLTELQGDSRSLPFSENVSAVQKLDFSDTMVQQKLDDIKDRIKREIRKELKIKEGAENLRKVTTDKKSLAYVDNILKKSNKKLEELHHKLQELNAHIVVSDPEDITDCPRTPDTPNNDPRCSTSNNRLKALQKQLDIELKVKQGAENMIQMYSNGSSKDRKLHGTAQQLLQDSKTKIEVIRMQILQAVQTNELAFDNAKPVISPLELRMEELRHHFRIEFAVAEGAKNVMKLLGSGKVTDRKALSEAQARFNESSQKLDLLKYSLEQRLNEVPKNHPKSRIIIEELSLVAASPTLSPRQSMISTQNQYSTLSKPAALTGTLEVRLMGCQDILENVPGRSKATSVALPGWSPSETRSSFMSRTSKSKSGSSRNLLKTDDLSNDVCAVLKLDNTVVGQTSWKPISNQSWDQKFTLELDRSRELEISVYWRDWRSLCAVKFLRLEDFLDNQRHGMCLYLEPQGTLFAEVTFFNPVIERRPKLQRQKKIFSKQQGKTFLRAPQMNINIATWGRLVRRAIPTVNHSGTFSPQAPVPTTVPVVDVRIPQLAPPASDSTVTKLDFDLEPEPPPAPPRASSLGEIDESSELRVLDIPGQDSETVFDIQNDRNSILPKSQSEYKPDTPQSGLEYSGIQELEDRRSQQRFQFNLQDFRCCAVLGRGHFGKVLLAEYKNTNEMFAIKALKKGDIVARDEVDSLMCEKRIFETVNSVRHPFLVNLFACFQTKEHVCFVMEYAAGGDLMMHIHTDVFSEPRAVFYAACVVLGLQYLHEHKIVYRDLKLDNLLLDTEGFVKIADFGLCKEGMGYGDRTSTFCGTPEFLAPEVLTETSYTRAVDWWGLGVLIYEMLVGESPFPGDDEEEVFDSIVNDEVRYPRFLSTEAISIMRRLLRRNPERRLGASEKDAEDVKKHPFFRLIDWSALMDKKVKPPFIPTIRGREDVSNFDDEFTSEAPILTPPREPRILSEEEQEMFRDFDYIADWC</sequence>
<name>PKN2_HUMAN</name>
<proteinExistence type="evidence at protein level"/>
<feature type="chain" id="PRO_0000055722" description="Serine/threonine-protein kinase N2">
    <location>
        <begin position="1"/>
        <end position="984"/>
    </location>
</feature>
<feature type="domain" description="REM-1 1" evidence="6">
    <location>
        <begin position="33"/>
        <end position="109"/>
    </location>
</feature>
<feature type="domain" description="REM-1 2" evidence="6">
    <location>
        <begin position="121"/>
        <end position="203"/>
    </location>
</feature>
<feature type="domain" description="REM-1 3" evidence="6">
    <location>
        <begin position="204"/>
        <end position="284"/>
    </location>
</feature>
<feature type="domain" description="C2" evidence="3">
    <location>
        <begin position="353"/>
        <end position="473"/>
    </location>
</feature>
<feature type="domain" description="Protein kinase" evidence="4">
    <location>
        <begin position="657"/>
        <end position="916"/>
    </location>
</feature>
<feature type="domain" description="AGC-kinase C-terminal" evidence="5">
    <location>
        <begin position="917"/>
        <end position="984"/>
    </location>
</feature>
<feature type="region of interest" description="Disordered" evidence="8">
    <location>
        <begin position="114"/>
        <end position="133"/>
    </location>
</feature>
<feature type="region of interest" description="Disordered" evidence="8">
    <location>
        <begin position="351"/>
        <end position="383"/>
    </location>
</feature>
<feature type="region of interest" description="Necessary to rescue apical junction formation" evidence="1">
    <location>
        <begin position="382"/>
        <end position="463"/>
    </location>
</feature>
<feature type="region of interest" description="Disordered" evidence="8">
    <location>
        <begin position="558"/>
        <end position="584"/>
    </location>
</feature>
<feature type="region of interest" description="Necessary for the catalytic activity">
    <location>
        <begin position="917"/>
        <end position="977"/>
    </location>
</feature>
<feature type="region of interest" description="Negatively regulates the responsiveness of the catalytic activity by cardiolipin and is required for optimal activation by the GTP-bound RhoA">
    <location>
        <begin position="978"/>
        <end position="984"/>
    </location>
</feature>
<feature type="compositionally biased region" description="Polar residues" evidence="8">
    <location>
        <begin position="123"/>
        <end position="133"/>
    </location>
</feature>
<feature type="compositionally biased region" description="Low complexity" evidence="8">
    <location>
        <begin position="364"/>
        <end position="381"/>
    </location>
</feature>
<feature type="active site" description="Proton acceptor" evidence="4 7">
    <location>
        <position position="782"/>
    </location>
</feature>
<feature type="binding site" evidence="4">
    <location>
        <begin position="663"/>
        <end position="671"/>
    </location>
    <ligand>
        <name>ATP</name>
        <dbReference type="ChEBI" id="CHEBI:30616"/>
    </ligand>
</feature>
<feature type="binding site" evidence="4">
    <location>
        <position position="686"/>
    </location>
    <ligand>
        <name>ATP</name>
        <dbReference type="ChEBI" id="CHEBI:30616"/>
    </ligand>
</feature>
<feature type="site" description="Cleavage; by caspase-3">
    <location>
        <begin position="117"/>
        <end position="118"/>
    </location>
</feature>
<feature type="site" description="Cleavage; by caspase-3">
    <location>
        <begin position="700"/>
        <end position="701"/>
    </location>
</feature>
<feature type="modified residue" description="Phosphoserine" evidence="35">
    <location>
        <position position="21"/>
    </location>
</feature>
<feature type="modified residue" description="N6-acetyllysine" evidence="2">
    <location>
        <position position="77"/>
    </location>
</feature>
<feature type="modified residue" description="Phosphoserine" evidence="32">
    <location>
        <position position="110"/>
    </location>
</feature>
<feature type="modified residue" description="Phosphothreonine" evidence="24 32">
    <location>
        <position position="121"/>
    </location>
</feature>
<feature type="modified residue" description="Phosphothreonine" evidence="24 32">
    <location>
        <position position="124"/>
    </location>
</feature>
<feature type="modified residue" description="Phosphoserine" evidence="30 32 34">
    <location>
        <position position="302"/>
    </location>
</feature>
<feature type="modified residue" description="Phosphoserine" evidence="30 32 34">
    <location>
        <position position="306"/>
    </location>
</feature>
<feature type="modified residue" description="Phosphoserine" evidence="30 32 34 35">
    <location>
        <position position="360"/>
    </location>
</feature>
<feature type="modified residue" description="Phosphoserine" evidence="32">
    <location>
        <position position="362"/>
    </location>
</feature>
<feature type="modified residue" description="Phosphoserine" evidence="32">
    <location>
        <position position="535"/>
    </location>
</feature>
<feature type="modified residue" description="Phosphoserine" evidence="34 35">
    <location>
        <position position="583"/>
    </location>
</feature>
<feature type="modified residue" description="Phosphoserine" evidence="2">
    <location>
        <position position="620"/>
    </location>
</feature>
<feature type="modified residue" description="Phosphothreonine" evidence="32 35">
    <location>
        <position position="628"/>
    </location>
</feature>
<feature type="modified residue" description="Phosphoserine" evidence="32">
    <location>
        <position position="631"/>
    </location>
</feature>
<feature type="modified residue" description="Phosphothreonine; by PDPK1" evidence="11">
    <location>
        <position position="816"/>
    </location>
</feature>
<feature type="modified residue" description="Phosphoserine" evidence="36">
    <location>
        <position position="952"/>
    </location>
</feature>
<feature type="modified residue" description="Phosphothreonine" evidence="31 32 33 34 35 36">
    <location>
        <position position="958"/>
    </location>
</feature>
<feature type="splice variant" id="VSP_042180" description="In isoform 5." evidence="27">
    <location>
        <begin position="1"/>
        <end position="326"/>
    </location>
</feature>
<feature type="splice variant" id="VSP_042181" description="In isoform 4." evidence="27">
    <location>
        <begin position="1"/>
        <end position="157"/>
    </location>
</feature>
<feature type="splice variant" id="VSP_042182" description="In isoform 5." evidence="27">
    <original>LTG</original>
    <variation>MNS</variation>
    <location>
        <begin position="327"/>
        <end position="329"/>
    </location>
</feature>
<feature type="splice variant" id="VSP_042183" description="In isoform 2." evidence="27">
    <location>
        <begin position="375"/>
        <end position="390"/>
    </location>
</feature>
<feature type="splice variant" id="VSP_042184" description="In isoform 3." evidence="28">
    <location>
        <begin position="428"/>
        <end position="475"/>
    </location>
</feature>
<feature type="sequence variant" id="VAR_050562" description="In dbSNP:rs12039846.">
    <original>E</original>
    <variation>D</variation>
    <location>
        <position position="94"/>
    </location>
</feature>
<feature type="sequence variant" id="VAR_050563" description="In dbSNP:rs35207128.">
    <original>A</original>
    <variation>E</variation>
    <location>
        <position position="197"/>
    </location>
</feature>
<feature type="sequence variant" id="VAR_050564" description="In dbSNP:rs12085658.">
    <original>Q</original>
    <variation>R</variation>
    <location>
        <position position="655"/>
    </location>
</feature>
<feature type="mutagenesis site" description="Prevents proteolytic processing by caspase-3 during apoptosis. Diminishes pro-apoptotic function; when associated with E-700." evidence="13 26">
    <original>D</original>
    <variation>A</variation>
    <location>
        <position position="117"/>
    </location>
</feature>
<feature type="mutagenesis site" description="Does not suppress ciliogenesis; when associated with A-124." evidence="24">
    <original>T</original>
    <variation>A</variation>
    <location>
        <position position="121"/>
    </location>
</feature>
<feature type="mutagenesis site" description="Does not suppress ciliogenesis; when associated with A-121." evidence="24">
    <original>T</original>
    <variation>A</variation>
    <location>
        <position position="124"/>
    </location>
</feature>
<feature type="mutagenesis site" description="Does not inhibit interaction with PTPN13." evidence="14">
    <original>K</original>
    <variation>R</variation>
    <location>
        <position position="686"/>
    </location>
</feature>
<feature type="mutagenesis site" description="Prevents proteolytic processing by caspase-3 during apoptosis. Diminishes pro-apoptotic function; when associated with A-117." evidence="13 26">
    <original>D</original>
    <variation>E</variation>
    <location>
        <position position="700"/>
    </location>
</feature>
<feature type="mutagenesis site" description="Reduces catalytic activity." evidence="20">
    <original>T</original>
    <variation>A</variation>
    <location>
        <position position="816"/>
    </location>
</feature>
<feature type="mutagenesis site" description="Abolishes catalytic activity." evidence="20">
    <original>T</original>
    <variation>A</variation>
    <location>
        <position position="958"/>
    </location>
</feature>
<feature type="mutagenesis site" description="Abolishes interaction with PDPK1 and prevents the phosphorylation of AKT1 at 'Ser-473'." evidence="10">
    <original>F</original>
    <variation>A</variation>
    <location>
        <position position="974"/>
    </location>
</feature>
<feature type="mutagenesis site" description="Abolishes interaction with PDPK1 and prevents the phosphorylation of AKT1 at 'Ser-473'. Reduces catalytic activity by 90%." evidence="10 20">
    <original>F</original>
    <variation>A</variation>
    <variation>L</variation>
    <location>
        <position position="977"/>
    </location>
</feature>
<feature type="mutagenesis site" description="Reduces catalytic activity by 50%." evidence="10 20">
    <original>F</original>
    <variation>W</variation>
    <variation>Y</variation>
    <location>
        <position position="977"/>
    </location>
</feature>
<feature type="mutagenesis site" description="Abolishes interaction with PDPK1 and prevents the phosphorylation of AKT1 at 'Ser-473'." evidence="10 20">
    <original>D</original>
    <variation>A</variation>
    <variation>S</variation>
    <location>
        <position position="978"/>
    </location>
</feature>
<feature type="mutagenesis site" description="Does not inhibit catalytic activity." evidence="10 20">
    <original>D</original>
    <variation>A</variation>
    <location>
        <position position="978"/>
    </location>
</feature>
<feature type="mutagenesis site" description="Abolishes interaction with PDPK1 and prevents the phosphorylation of AKT1 at 'Ser-473'." evidence="10 20">
    <original>Y</original>
    <variation>A</variation>
    <location>
        <position position="979"/>
    </location>
</feature>
<feature type="mutagenesis site" description="Reduces catalytic activity by 50%." evidence="10 20">
    <original>Y</original>
    <variation>A</variation>
    <location>
        <position position="979"/>
    </location>
</feature>
<feature type="mutagenesis site" description="Reduces catalytic activity by 25%." evidence="10 20">
    <original>Y</original>
    <variation>F</variation>
    <variation>L</variation>
    <variation>W</variation>
    <location>
        <position position="979"/>
    </location>
</feature>
<feature type="mutagenesis site" description="Inhibits interaction with PTPN13." evidence="14">
    <original>C</original>
    <variation>S</variation>
    <location>
        <position position="984"/>
    </location>
</feature>
<feature type="sequence conflict" description="In Ref. 3; BAG62673." evidence="29" ref="3">
    <original>I</original>
    <variation>V</variation>
    <location>
        <position position="483"/>
    </location>
</feature>
<feature type="sequence conflict" description="In Ref. 3; BAG60783." evidence="29" ref="3">
    <original>K</original>
    <variation>R</variation>
    <location>
        <position position="565"/>
    </location>
</feature>
<feature type="sequence conflict" description="In Ref. 3; BAG62673." evidence="29" ref="3">
    <original>K</original>
    <variation>R</variation>
    <location>
        <position position="625"/>
    </location>
</feature>
<feature type="sequence conflict" description="In Ref. 6; AAI25200." evidence="29" ref="6">
    <original>F</original>
    <variation>L</variation>
    <location>
        <position position="795"/>
    </location>
</feature>
<feature type="helix" evidence="37">
    <location>
        <begin position="647"/>
        <end position="649"/>
    </location>
</feature>
<feature type="strand" evidence="37">
    <location>
        <begin position="652"/>
        <end position="654"/>
    </location>
</feature>
<feature type="strand" evidence="37">
    <location>
        <begin position="657"/>
        <end position="665"/>
    </location>
</feature>
<feature type="strand" evidence="37">
    <location>
        <begin position="670"/>
        <end position="676"/>
    </location>
</feature>
<feature type="strand" evidence="37">
    <location>
        <begin position="682"/>
        <end position="689"/>
    </location>
</feature>
<feature type="helix" evidence="37">
    <location>
        <begin position="690"/>
        <end position="695"/>
    </location>
</feature>
<feature type="helix" evidence="37">
    <location>
        <begin position="699"/>
        <end position="714"/>
    </location>
</feature>
<feature type="strand" evidence="37">
    <location>
        <begin position="723"/>
        <end position="729"/>
    </location>
</feature>
<feature type="strand" evidence="37">
    <location>
        <begin position="732"/>
        <end position="738"/>
    </location>
</feature>
<feature type="helix" evidence="37">
    <location>
        <begin position="745"/>
        <end position="749"/>
    </location>
</feature>
<feature type="helix" evidence="37">
    <location>
        <begin position="756"/>
        <end position="774"/>
    </location>
</feature>
<feature type="turn" evidence="37">
    <location>
        <begin position="775"/>
        <end position="777"/>
    </location>
</feature>
<feature type="helix" evidence="37">
    <location>
        <begin position="785"/>
        <end position="787"/>
    </location>
</feature>
<feature type="strand" evidence="37">
    <location>
        <begin position="788"/>
        <end position="790"/>
    </location>
</feature>
<feature type="strand" evidence="37">
    <location>
        <begin position="796"/>
        <end position="798"/>
    </location>
</feature>
<feature type="strand" evidence="37">
    <location>
        <begin position="805"/>
        <end position="807"/>
    </location>
</feature>
<feature type="helix" evidence="37">
    <location>
        <begin position="821"/>
        <end position="823"/>
    </location>
</feature>
<feature type="helix" evidence="37">
    <location>
        <begin position="826"/>
        <end position="830"/>
    </location>
</feature>
<feature type="helix" evidence="37">
    <location>
        <begin position="838"/>
        <end position="852"/>
    </location>
</feature>
<feature type="helix" evidence="37">
    <location>
        <begin position="862"/>
        <end position="871"/>
    </location>
</feature>
<feature type="helix" evidence="37">
    <location>
        <begin position="882"/>
        <end position="891"/>
    </location>
</feature>
<feature type="helix" evidence="37">
    <location>
        <begin position="896"/>
        <end position="898"/>
    </location>
</feature>
<feature type="strand" evidence="37">
    <location>
        <begin position="903"/>
        <end position="905"/>
    </location>
</feature>
<feature type="helix" evidence="37">
    <location>
        <begin position="907"/>
        <end position="911"/>
    </location>
</feature>
<feature type="helix" evidence="37">
    <location>
        <begin position="914"/>
        <end position="916"/>
    </location>
</feature>
<feature type="helix" evidence="37">
    <location>
        <begin position="921"/>
        <end position="925"/>
    </location>
</feature>
<feature type="strand" evidence="37">
    <location>
        <begin position="944"/>
        <end position="946"/>
    </location>
</feature>
<feature type="helix" evidence="37">
    <location>
        <begin position="948"/>
        <end position="951"/>
    </location>
</feature>
<feature type="turn" evidence="38">
    <location>
        <begin position="973"/>
        <end position="976"/>
    </location>
</feature>
<reference key="1">
    <citation type="journal article" date="1994" name="FEBS Lett.">
        <title>Identification of multiple, novel, protein kinase C-related gene products.</title>
        <authorList>
            <person name="Palmer R.H."/>
            <person name="Ridden J."/>
            <person name="Parker P.J."/>
        </authorList>
    </citation>
    <scope>NUCLEOTIDE SEQUENCE [MRNA] (ISOFORM 1)</scope>
</reference>
<reference key="2">
    <citation type="journal article" date="1995" name="Eur. J. Biochem.">
        <title>Cloning and expression patterns of two members of a novel protein-kinase-C-related kinase family.</title>
        <authorList>
            <person name="Palmer R.H."/>
            <person name="Ridden J."/>
            <person name="Parker P.J."/>
        </authorList>
    </citation>
    <scope>NUCLEOTIDE SEQUENCE [MRNA] (ISOFORM 1)</scope>
    <source>
        <tissue>B-cell</tissue>
        <tissue>Spleen</tissue>
    </source>
</reference>
<reference key="3">
    <citation type="journal article" date="2004" name="Nat. Genet.">
        <title>Complete sequencing and characterization of 21,243 full-length human cDNAs.</title>
        <authorList>
            <person name="Ota T."/>
            <person name="Suzuki Y."/>
            <person name="Nishikawa T."/>
            <person name="Otsuki T."/>
            <person name="Sugiyama T."/>
            <person name="Irie R."/>
            <person name="Wakamatsu A."/>
            <person name="Hayashi K."/>
            <person name="Sato H."/>
            <person name="Nagai K."/>
            <person name="Kimura K."/>
            <person name="Makita H."/>
            <person name="Sekine M."/>
            <person name="Obayashi M."/>
            <person name="Nishi T."/>
            <person name="Shibahara T."/>
            <person name="Tanaka T."/>
            <person name="Ishii S."/>
            <person name="Yamamoto J."/>
            <person name="Saito K."/>
            <person name="Kawai Y."/>
            <person name="Isono Y."/>
            <person name="Nakamura Y."/>
            <person name="Nagahari K."/>
            <person name="Murakami K."/>
            <person name="Yasuda T."/>
            <person name="Iwayanagi T."/>
            <person name="Wagatsuma M."/>
            <person name="Shiratori A."/>
            <person name="Sudo H."/>
            <person name="Hosoiri T."/>
            <person name="Kaku Y."/>
            <person name="Kodaira H."/>
            <person name="Kondo H."/>
            <person name="Sugawara M."/>
            <person name="Takahashi M."/>
            <person name="Kanda K."/>
            <person name="Yokoi T."/>
            <person name="Furuya T."/>
            <person name="Kikkawa E."/>
            <person name="Omura Y."/>
            <person name="Abe K."/>
            <person name="Kamihara K."/>
            <person name="Katsuta N."/>
            <person name="Sato K."/>
            <person name="Tanikawa M."/>
            <person name="Yamazaki M."/>
            <person name="Ninomiya K."/>
            <person name="Ishibashi T."/>
            <person name="Yamashita H."/>
            <person name="Murakawa K."/>
            <person name="Fujimori K."/>
            <person name="Tanai H."/>
            <person name="Kimata M."/>
            <person name="Watanabe M."/>
            <person name="Hiraoka S."/>
            <person name="Chiba Y."/>
            <person name="Ishida S."/>
            <person name="Ono Y."/>
            <person name="Takiguchi S."/>
            <person name="Watanabe S."/>
            <person name="Yosida M."/>
            <person name="Hotuta T."/>
            <person name="Kusano J."/>
            <person name="Kanehori K."/>
            <person name="Takahashi-Fujii A."/>
            <person name="Hara H."/>
            <person name="Tanase T.-O."/>
            <person name="Nomura Y."/>
            <person name="Togiya S."/>
            <person name="Komai F."/>
            <person name="Hara R."/>
            <person name="Takeuchi K."/>
            <person name="Arita M."/>
            <person name="Imose N."/>
            <person name="Musashino K."/>
            <person name="Yuuki H."/>
            <person name="Oshima A."/>
            <person name="Sasaki N."/>
            <person name="Aotsuka S."/>
            <person name="Yoshikawa Y."/>
            <person name="Matsunawa H."/>
            <person name="Ichihara T."/>
            <person name="Shiohata N."/>
            <person name="Sano S."/>
            <person name="Moriya S."/>
            <person name="Momiyama H."/>
            <person name="Satoh N."/>
            <person name="Takami S."/>
            <person name="Terashima Y."/>
            <person name="Suzuki O."/>
            <person name="Nakagawa S."/>
            <person name="Senoh A."/>
            <person name="Mizoguchi H."/>
            <person name="Goto Y."/>
            <person name="Shimizu F."/>
            <person name="Wakebe H."/>
            <person name="Hishigaki H."/>
            <person name="Watanabe T."/>
            <person name="Sugiyama A."/>
            <person name="Takemoto M."/>
            <person name="Kawakami B."/>
            <person name="Yamazaki M."/>
            <person name="Watanabe K."/>
            <person name="Kumagai A."/>
            <person name="Itakura S."/>
            <person name="Fukuzumi Y."/>
            <person name="Fujimori Y."/>
            <person name="Komiyama M."/>
            <person name="Tashiro H."/>
            <person name="Tanigami A."/>
            <person name="Fujiwara T."/>
            <person name="Ono T."/>
            <person name="Yamada K."/>
            <person name="Fujii Y."/>
            <person name="Ozaki K."/>
            <person name="Hirao M."/>
            <person name="Ohmori Y."/>
            <person name="Kawabata A."/>
            <person name="Hikiji T."/>
            <person name="Kobatake N."/>
            <person name="Inagaki H."/>
            <person name="Ikema Y."/>
            <person name="Okamoto S."/>
            <person name="Okitani R."/>
            <person name="Kawakami T."/>
            <person name="Noguchi S."/>
            <person name="Itoh T."/>
            <person name="Shigeta K."/>
            <person name="Senba T."/>
            <person name="Matsumura K."/>
            <person name="Nakajima Y."/>
            <person name="Mizuno T."/>
            <person name="Morinaga M."/>
            <person name="Sasaki M."/>
            <person name="Togashi T."/>
            <person name="Oyama M."/>
            <person name="Hata H."/>
            <person name="Watanabe M."/>
            <person name="Komatsu T."/>
            <person name="Mizushima-Sugano J."/>
            <person name="Satoh T."/>
            <person name="Shirai Y."/>
            <person name="Takahashi Y."/>
            <person name="Nakagawa K."/>
            <person name="Okumura K."/>
            <person name="Nagase T."/>
            <person name="Nomura N."/>
            <person name="Kikuchi H."/>
            <person name="Masuho Y."/>
            <person name="Yamashita R."/>
            <person name="Nakai K."/>
            <person name="Yada T."/>
            <person name="Nakamura Y."/>
            <person name="Ohara O."/>
            <person name="Isogai T."/>
            <person name="Sugano S."/>
        </authorList>
    </citation>
    <scope>NUCLEOTIDE SEQUENCE [LARGE SCALE MRNA] (ISOFORMS 2; 4 AND 5)</scope>
    <source>
        <tissue>Placenta</tissue>
        <tissue>Spleen</tissue>
    </source>
</reference>
<reference key="4">
    <citation type="journal article" date="2006" name="Nature">
        <title>The DNA sequence and biological annotation of human chromosome 1.</title>
        <authorList>
            <person name="Gregory S.G."/>
            <person name="Barlow K.F."/>
            <person name="McLay K.E."/>
            <person name="Kaul R."/>
            <person name="Swarbreck D."/>
            <person name="Dunham A."/>
            <person name="Scott C.E."/>
            <person name="Howe K.L."/>
            <person name="Woodfine K."/>
            <person name="Spencer C.C.A."/>
            <person name="Jones M.C."/>
            <person name="Gillson C."/>
            <person name="Searle S."/>
            <person name="Zhou Y."/>
            <person name="Kokocinski F."/>
            <person name="McDonald L."/>
            <person name="Evans R."/>
            <person name="Phillips K."/>
            <person name="Atkinson A."/>
            <person name="Cooper R."/>
            <person name="Jones C."/>
            <person name="Hall R.E."/>
            <person name="Andrews T.D."/>
            <person name="Lloyd C."/>
            <person name="Ainscough R."/>
            <person name="Almeida J.P."/>
            <person name="Ambrose K.D."/>
            <person name="Anderson F."/>
            <person name="Andrew R.W."/>
            <person name="Ashwell R.I.S."/>
            <person name="Aubin K."/>
            <person name="Babbage A.K."/>
            <person name="Bagguley C.L."/>
            <person name="Bailey J."/>
            <person name="Beasley H."/>
            <person name="Bethel G."/>
            <person name="Bird C.P."/>
            <person name="Bray-Allen S."/>
            <person name="Brown J.Y."/>
            <person name="Brown A.J."/>
            <person name="Buckley D."/>
            <person name="Burton J."/>
            <person name="Bye J."/>
            <person name="Carder C."/>
            <person name="Chapman J.C."/>
            <person name="Clark S.Y."/>
            <person name="Clarke G."/>
            <person name="Clee C."/>
            <person name="Cobley V."/>
            <person name="Collier R.E."/>
            <person name="Corby N."/>
            <person name="Coville G.J."/>
            <person name="Davies J."/>
            <person name="Deadman R."/>
            <person name="Dunn M."/>
            <person name="Earthrowl M."/>
            <person name="Ellington A.G."/>
            <person name="Errington H."/>
            <person name="Frankish A."/>
            <person name="Frankland J."/>
            <person name="French L."/>
            <person name="Garner P."/>
            <person name="Garnett J."/>
            <person name="Gay L."/>
            <person name="Ghori M.R.J."/>
            <person name="Gibson R."/>
            <person name="Gilby L.M."/>
            <person name="Gillett W."/>
            <person name="Glithero R.J."/>
            <person name="Grafham D.V."/>
            <person name="Griffiths C."/>
            <person name="Griffiths-Jones S."/>
            <person name="Grocock R."/>
            <person name="Hammond S."/>
            <person name="Harrison E.S.I."/>
            <person name="Hart E."/>
            <person name="Haugen E."/>
            <person name="Heath P.D."/>
            <person name="Holmes S."/>
            <person name="Holt K."/>
            <person name="Howden P.J."/>
            <person name="Hunt A.R."/>
            <person name="Hunt S.E."/>
            <person name="Hunter G."/>
            <person name="Isherwood J."/>
            <person name="James R."/>
            <person name="Johnson C."/>
            <person name="Johnson D."/>
            <person name="Joy A."/>
            <person name="Kay M."/>
            <person name="Kershaw J.K."/>
            <person name="Kibukawa M."/>
            <person name="Kimberley A.M."/>
            <person name="King A."/>
            <person name="Knights A.J."/>
            <person name="Lad H."/>
            <person name="Laird G."/>
            <person name="Lawlor S."/>
            <person name="Leongamornlert D.A."/>
            <person name="Lloyd D.M."/>
            <person name="Loveland J."/>
            <person name="Lovell J."/>
            <person name="Lush M.J."/>
            <person name="Lyne R."/>
            <person name="Martin S."/>
            <person name="Mashreghi-Mohammadi M."/>
            <person name="Matthews L."/>
            <person name="Matthews N.S.W."/>
            <person name="McLaren S."/>
            <person name="Milne S."/>
            <person name="Mistry S."/>
            <person name="Moore M.J.F."/>
            <person name="Nickerson T."/>
            <person name="O'Dell C.N."/>
            <person name="Oliver K."/>
            <person name="Palmeiri A."/>
            <person name="Palmer S.A."/>
            <person name="Parker A."/>
            <person name="Patel D."/>
            <person name="Pearce A.V."/>
            <person name="Peck A.I."/>
            <person name="Pelan S."/>
            <person name="Phelps K."/>
            <person name="Phillimore B.J."/>
            <person name="Plumb R."/>
            <person name="Rajan J."/>
            <person name="Raymond C."/>
            <person name="Rouse G."/>
            <person name="Saenphimmachak C."/>
            <person name="Sehra H.K."/>
            <person name="Sheridan E."/>
            <person name="Shownkeen R."/>
            <person name="Sims S."/>
            <person name="Skuce C.D."/>
            <person name="Smith M."/>
            <person name="Steward C."/>
            <person name="Subramanian S."/>
            <person name="Sycamore N."/>
            <person name="Tracey A."/>
            <person name="Tromans A."/>
            <person name="Van Helmond Z."/>
            <person name="Wall M."/>
            <person name="Wallis J.M."/>
            <person name="White S."/>
            <person name="Whitehead S.L."/>
            <person name="Wilkinson J.E."/>
            <person name="Willey D.L."/>
            <person name="Williams H."/>
            <person name="Wilming L."/>
            <person name="Wray P.W."/>
            <person name="Wu Z."/>
            <person name="Coulson A."/>
            <person name="Vaudin M."/>
            <person name="Sulston J.E."/>
            <person name="Durbin R.M."/>
            <person name="Hubbard T."/>
            <person name="Wooster R."/>
            <person name="Dunham I."/>
            <person name="Carter N.P."/>
            <person name="McVean G."/>
            <person name="Ross M.T."/>
            <person name="Harrow J."/>
            <person name="Olson M.V."/>
            <person name="Beck S."/>
            <person name="Rogers J."/>
            <person name="Bentley D.R."/>
        </authorList>
    </citation>
    <scope>NUCLEOTIDE SEQUENCE [LARGE SCALE GENOMIC DNA]</scope>
</reference>
<reference key="5">
    <citation type="submission" date="2005-09" db="EMBL/GenBank/DDBJ databases">
        <authorList>
            <person name="Mural R.J."/>
            <person name="Istrail S."/>
            <person name="Sutton G.G."/>
            <person name="Florea L."/>
            <person name="Halpern A.L."/>
            <person name="Mobarry C.M."/>
            <person name="Lippert R."/>
            <person name="Walenz B."/>
            <person name="Shatkay H."/>
            <person name="Dew I."/>
            <person name="Miller J.R."/>
            <person name="Flanigan M.J."/>
            <person name="Edwards N.J."/>
            <person name="Bolanos R."/>
            <person name="Fasulo D."/>
            <person name="Halldorsson B.V."/>
            <person name="Hannenhalli S."/>
            <person name="Turner R."/>
            <person name="Yooseph S."/>
            <person name="Lu F."/>
            <person name="Nusskern D.R."/>
            <person name="Shue B.C."/>
            <person name="Zheng X.H."/>
            <person name="Zhong F."/>
            <person name="Delcher A.L."/>
            <person name="Huson D.H."/>
            <person name="Kravitz S.A."/>
            <person name="Mouchard L."/>
            <person name="Reinert K."/>
            <person name="Remington K.A."/>
            <person name="Clark A.G."/>
            <person name="Waterman M.S."/>
            <person name="Eichler E.E."/>
            <person name="Adams M.D."/>
            <person name="Hunkapiller M.W."/>
            <person name="Myers E.W."/>
            <person name="Venter J.C."/>
        </authorList>
    </citation>
    <scope>NUCLEOTIDE SEQUENCE [LARGE SCALE GENOMIC DNA]</scope>
</reference>
<reference key="6">
    <citation type="journal article" date="2004" name="Genome Res.">
        <title>The status, quality, and expansion of the NIH full-length cDNA project: the Mammalian Gene Collection (MGC).</title>
        <authorList>
            <consortium name="The MGC Project Team"/>
        </authorList>
    </citation>
    <scope>NUCLEOTIDE SEQUENCE [LARGE SCALE MRNA] (ISOFORM 3)</scope>
</reference>
<reference key="7">
    <citation type="journal article" date="2004" name="J. Biol. Chem.">
        <title>Hyaluronan-CD44 interaction with Rac1-dependent protein kinase N-gamma promotes phospholipase Cgamma1 activation, Ca(2+) signaling, and cortactin-cytoskeleton function leading to keratinocyte adhesion and differentiation.</title>
        <authorList>
            <person name="Bourguignon L.Y."/>
            <person name="Singleton P.A."/>
            <person name="Diedrich F."/>
        </authorList>
    </citation>
    <scope>FUNCTION</scope>
    <scope>INTERACTION WITH CD44</scope>
</reference>
<reference key="8">
    <citation type="journal article" date="1997" name="J. Biol. Chem.">
        <title>Specific proteolysis of the kinase protein kinase C-related kinase 2 by caspase-3 during apoptosis. Identification by a novel, small pool expression cloning strategy.</title>
        <authorList>
            <person name="Cryns V.L."/>
            <person name="Byun Y."/>
            <person name="Rana A."/>
            <person name="Mellor H."/>
            <person name="Lustig K.D."/>
            <person name="Ghanem L."/>
            <person name="Parker P.J."/>
            <person name="Kirschner M.W."/>
            <person name="Yuan J."/>
        </authorList>
    </citation>
    <scope>ACTIVITY REGULATION</scope>
    <scope>PROTEOLYTIC PROCESSING</scope>
    <scope>MUTAGENESIS OF ASP-117 AND ASP-700</scope>
</reference>
<reference key="9">
    <citation type="journal article" date="1997" name="Mol. Cell. Biol.">
        <title>The PRK2 kinase is a potential effector target of both Rho and Rac GTPases and regulates actin cytoskeletal organization.</title>
        <authorList>
            <person name="Vincent S."/>
            <person name="Settleman J."/>
        </authorList>
    </citation>
    <scope>FUNCTION</scope>
    <scope>INTERACTION WITH RAC1 AND RHOA</scope>
    <scope>AUTOPHOSPHORYLATION</scope>
</reference>
<reference key="10">
    <citation type="journal article" date="1999" name="Curr. Biol.">
        <title>PDK1 acquires PDK2 activity in the presence of a synthetic peptide derived from the carboxyl terminus of PRK2.</title>
        <authorList>
            <person name="Balendran A."/>
            <person name="Casamayor A."/>
            <person name="Deak M."/>
            <person name="Paterson A."/>
            <person name="Gaffney P."/>
            <person name="Currie R."/>
            <person name="Downes C.P."/>
            <person name="Alessi D.R."/>
        </authorList>
    </citation>
    <scope>FUNCTION</scope>
    <scope>INTERACTION WITH PDPK1</scope>
    <scope>MUTAGENESIS OF PHE-974; PHE-977; ASP-978 AND TYR-979</scope>
</reference>
<reference key="11">
    <citation type="journal article" date="1999" name="J. Biol. Chem.">
        <title>Identification of Grb4/Nckbeta, a src homology 2 and 3 domain-containing adapter protein having similar binding and biological properties to Nck.</title>
        <authorList>
            <person name="Braverman L.E."/>
            <person name="Quilliam L.A."/>
        </authorList>
    </citation>
    <scope>INTERACTION WITH NCK1 AND NCK2</scope>
    <scope>TISSUE SPECIFICITY</scope>
</reference>
<reference key="12">
    <citation type="journal article" date="2000" name="J. Biol. Chem.">
        <title>MEK kinase 2 binds and activates protein kinase C-related kinase 2. Bifurcation of kinase regulatory pathways at the level of an MAPK kinase kinase.</title>
        <authorList>
            <person name="Sun W."/>
            <person name="Vincent S."/>
            <person name="Settleman J."/>
            <person name="Johnson G.L."/>
        </authorList>
    </citation>
    <scope>INTERACTION WITH MAP3K2</scope>
</reference>
<reference key="13">
    <citation type="journal article" date="2000" name="J. Biol. Chem.">
        <title>Inhibition of Akt and its anti-apoptotic activities by tumor necrosis factor-induced protein kinase C-related kinase 2 (PRK2) cleavage.</title>
        <authorList>
            <person name="Koh H."/>
            <person name="Lee K.H."/>
            <person name="Kim D."/>
            <person name="Kim S."/>
            <person name="Kim J.W."/>
            <person name="Chung J."/>
        </authorList>
    </citation>
    <scope>FUNCTION IN APOPTOSIS</scope>
    <scope>FUNCTION IN AKT1 ACTIVITY INHIBITION</scope>
    <scope>ACTIVITY REGULATION</scope>
    <scope>INTERACTION WITH AKT1</scope>
    <scope>MUTAGENESIS OF ASP-117 AND ASP-700</scope>
</reference>
<reference key="14">
    <citation type="journal article" date="2000" name="Proc. Natl. Acad. Sci. U.S.A.">
        <title>Phosphorylation of protein kinase N by phosphoinositide-dependent protein kinase-1 mediates insulin signals to the actin cytoskeleton.</title>
        <authorList>
            <person name="Dong L.Q."/>
            <person name="Landa L.R."/>
            <person name="Wick M.J."/>
            <person name="Zhu L."/>
            <person name="Mukai H."/>
            <person name="Ono Y."/>
            <person name="Liu F."/>
        </authorList>
    </citation>
    <scope>PHOSPHORYLATION AT THR-816 BY PDPK1</scope>
    <scope>INTERACTION WITH PDPK1</scope>
</reference>
<reference key="15">
    <citation type="journal article" date="2001" name="FEBS Lett.">
        <title>The protein kinase C-related kinase PRK2 interacts with the protein tyrosine phosphatase PTP-BL via a novel PDZ domain binding motif.</title>
        <authorList>
            <person name="Gross C."/>
            <person name="Heumann R."/>
            <person name="Erdmann K.S."/>
        </authorList>
    </citation>
    <scope>INTERACTION WITH PTPN13</scope>
    <scope>SUBCELLULAR LOCATION</scope>
    <scope>MUTAGENESIS OF LYS-686 AND CYS-984</scope>
</reference>
<reference key="16">
    <citation type="journal article" date="2002" name="Biochemistry">
        <title>Regulation of both PDK1 and the phosphorylation of PKC-zeta and -delta by a C-terminal PRK2 fragment.</title>
        <authorList>
            <person name="Hodgkinson C.P."/>
            <person name="Sale G.J."/>
        </authorList>
    </citation>
    <scope>FUNCTION IN KINASE ACTIVITY INHIBITION</scope>
    <scope>INTERACTION WITH PDPK1</scope>
</reference>
<reference key="17">
    <citation type="journal article" date="2002" name="J. Cell Biol.">
        <title>Fyn tyrosine kinase is a downstream mediator of Rho/PRK2 function in keratinocyte cell-cell adhesion.</title>
        <authorList>
            <person name="Calautti E."/>
            <person name="Grossi M."/>
            <person name="Mammucari C."/>
            <person name="Aoyama Y."/>
            <person name="Pirro M."/>
            <person name="Ono Y."/>
            <person name="Li J."/>
            <person name="Dotto G.P."/>
        </authorList>
    </citation>
    <scope>FUNCTION IN CELL ADHESION</scope>
    <scope>INDUCTION</scope>
</reference>
<reference key="18">
    <citation type="journal article" date="2004" name="J. Biol. Chem.">
        <title>Protein kinase C-related kinase 2 regulates hepatitis C virus RNA polymerase function by phosphorylation.</title>
        <authorList>
            <person name="Kim S.J."/>
            <person name="Kim J.H."/>
            <person name="Kim Y.G."/>
            <person name="Lim H.S."/>
            <person name="Oh J.W."/>
        </authorList>
    </citation>
    <scope>FUNCTION (MICROBIAL INFECTION)</scope>
    <scope>INTERACTION WITH HCV NS5B (MICROBIAL INFECTION)</scope>
</reference>
<reference key="19">
    <citation type="journal article" date="2006" name="Cell">
        <title>Global, in vivo, and site-specific phosphorylation dynamics in signaling networks.</title>
        <authorList>
            <person name="Olsen J.V."/>
            <person name="Blagoev B."/>
            <person name="Gnad F."/>
            <person name="Macek B."/>
            <person name="Kumar C."/>
            <person name="Mortensen P."/>
            <person name="Mann M."/>
        </authorList>
    </citation>
    <scope>PHOSPHORYLATION [LARGE SCALE ANALYSIS] AT THR-958</scope>
    <scope>IDENTIFICATION BY MASS SPECTROMETRY [LARGE SCALE ANALYSIS]</scope>
    <source>
        <tissue>Cervix carcinoma</tissue>
    </source>
</reference>
<reference key="20">
    <citation type="journal article" date="2006" name="Nat. Biotechnol.">
        <title>A probability-based approach for high-throughput protein phosphorylation analysis and site localization.</title>
        <authorList>
            <person name="Beausoleil S.A."/>
            <person name="Villen J."/>
            <person name="Gerber S.A."/>
            <person name="Rush J."/>
            <person name="Gygi S.P."/>
        </authorList>
    </citation>
    <scope>PHOSPHORYLATION [LARGE SCALE ANALYSIS] AT SER-302; SER-306 AND SER-360</scope>
    <scope>IDENTIFICATION BY MASS SPECTROMETRY [LARGE SCALE ANALYSIS]</scope>
    <source>
        <tissue>Cervix carcinoma</tissue>
    </source>
</reference>
<reference key="21">
    <citation type="journal article" date="2007" name="EMBO J.">
        <title>Rho GTPases regulate PRK2/PKN2 to control entry into mitosis and exit from cytokinesis.</title>
        <authorList>
            <person name="Schmidt A."/>
            <person name="Durgan J."/>
            <person name="Magalhaes A."/>
            <person name="Hall A."/>
        </authorList>
    </citation>
    <scope>FUNCTION</scope>
    <scope>PHOSPHORYLATION</scope>
    <scope>SUBCELLULAR LOCATION</scope>
</reference>
<reference key="22">
    <citation type="journal article" date="2007" name="J. Proteome Res.">
        <title>Improved titanium dioxide enrichment of phosphopeptides from HeLa cells and high confident phosphopeptide identification by cross-validation of MS/MS and MS/MS/MS spectra.</title>
        <authorList>
            <person name="Yu L.R."/>
            <person name="Zhu Z."/>
            <person name="Chan K.C."/>
            <person name="Issaq H.J."/>
            <person name="Dimitrov D.S."/>
            <person name="Veenstra T.D."/>
        </authorList>
    </citation>
    <scope>IDENTIFICATION BY MASS SPECTROMETRY [LARGE SCALE ANALYSIS]</scope>
    <source>
        <tissue>Cervix carcinoma</tissue>
    </source>
</reference>
<reference key="23">
    <citation type="journal article" date="2008" name="Arch. Biochem. Biophys.">
        <title>The C-terminus of PRK2/PKNgamma is required for optimal activation by RhoA in a GTP-dependent manner.</title>
        <authorList>
            <person name="Lim W.G."/>
            <person name="Chen X."/>
            <person name="Liu J.P."/>
            <person name="Tan B.J."/>
            <person name="Zhou S."/>
            <person name="Smith A."/>
            <person name="Lees N."/>
            <person name="Hou L."/>
            <person name="Gu F."/>
            <person name="Yu X.Y."/>
            <person name="Du Y."/>
            <person name="Smith D."/>
            <person name="Verma C."/>
            <person name="Liu K."/>
            <person name="Duan W."/>
        </authorList>
    </citation>
    <scope>ACTIVITY REGULATION</scope>
    <scope>INTERACTION WITH PDPK1</scope>
    <scope>MUTAGENESIS OF THR-816; THR-958; PHE-977; ASP-978 AND TYR-979</scope>
</reference>
<reference key="24">
    <citation type="journal article" date="2008" name="J. Proteome Res.">
        <title>Combining protein-based IMAC, peptide-based IMAC, and MudPIT for efficient phosphoproteomic analysis.</title>
        <authorList>
            <person name="Cantin G.T."/>
            <person name="Yi W."/>
            <person name="Lu B."/>
            <person name="Park S.K."/>
            <person name="Xu T."/>
            <person name="Lee J.-D."/>
            <person name="Yates J.R. III"/>
        </authorList>
    </citation>
    <scope>IDENTIFICATION BY MASS SPECTROMETRY [LARGE SCALE ANALYSIS]</scope>
    <source>
        <tissue>Cervix carcinoma</tissue>
    </source>
</reference>
<reference key="25">
    <citation type="journal article" date="2008" name="Mol. Cell">
        <title>Kinase-selective enrichment enables quantitative phosphoproteomics of the kinome across the cell cycle.</title>
        <authorList>
            <person name="Daub H."/>
            <person name="Olsen J.V."/>
            <person name="Bairlein M."/>
            <person name="Gnad F."/>
            <person name="Oppermann F.S."/>
            <person name="Korner R."/>
            <person name="Greff Z."/>
            <person name="Keri G."/>
            <person name="Stemmann O."/>
            <person name="Mann M."/>
        </authorList>
    </citation>
    <scope>PHOSPHORYLATION [LARGE SCALE ANALYSIS] AT THR-958</scope>
    <scope>IDENTIFICATION BY MASS SPECTROMETRY [LARGE SCALE ANALYSIS]</scope>
    <source>
        <tissue>Cervix carcinoma</tissue>
    </source>
</reference>
<reference key="26">
    <citation type="journal article" date="2008" name="Proc. Natl. Acad. Sci. U.S.A.">
        <title>A quantitative atlas of mitotic phosphorylation.</title>
        <authorList>
            <person name="Dephoure N."/>
            <person name="Zhou C."/>
            <person name="Villen J."/>
            <person name="Beausoleil S.A."/>
            <person name="Bakalarski C.E."/>
            <person name="Elledge S.J."/>
            <person name="Gygi S.P."/>
        </authorList>
    </citation>
    <scope>PHOSPHORYLATION [LARGE SCALE ANALYSIS] AT SER-110; THR-121; THR-124; SER-302; SER-306; SER-360; SER-362; SER-535; THR-628; SER-631 AND THR-958</scope>
    <scope>IDENTIFICATION BY MASS SPECTROMETRY [LARGE SCALE ANALYSIS]</scope>
    <source>
        <tissue>Cervix carcinoma</tissue>
    </source>
</reference>
<reference key="27">
    <citation type="journal article" date="2009" name="Anal. Chem.">
        <title>Lys-N and trypsin cover complementary parts of the phosphoproteome in a refined SCX-based approach.</title>
        <authorList>
            <person name="Gauci S."/>
            <person name="Helbig A.O."/>
            <person name="Slijper M."/>
            <person name="Krijgsveld J."/>
            <person name="Heck A.J."/>
            <person name="Mohammed S."/>
        </authorList>
    </citation>
    <scope>IDENTIFICATION BY MASS SPECTROMETRY [LARGE SCALE ANALYSIS]</scope>
</reference>
<reference key="28">
    <citation type="journal article" date="2009" name="Mol. Cell. Proteomics">
        <title>Large-scale proteomics analysis of the human kinome.</title>
        <authorList>
            <person name="Oppermann F.S."/>
            <person name="Gnad F."/>
            <person name="Olsen J.V."/>
            <person name="Hornberger R."/>
            <person name="Greff Z."/>
            <person name="Keri G."/>
            <person name="Mann M."/>
            <person name="Daub H."/>
        </authorList>
    </citation>
    <scope>IDENTIFICATION BY MASS SPECTROMETRY [LARGE SCALE ANALYSIS]</scope>
</reference>
<reference key="29">
    <citation type="journal article" date="2009" name="Sci. Signal.">
        <title>Quantitative phosphoproteomic analysis of T cell receptor signaling reveals system-wide modulation of protein-protein interactions.</title>
        <authorList>
            <person name="Mayya V."/>
            <person name="Lundgren D.H."/>
            <person name="Hwang S.-I."/>
            <person name="Rezaul K."/>
            <person name="Wu L."/>
            <person name="Eng J.K."/>
            <person name="Rodionov V."/>
            <person name="Han D.K."/>
        </authorList>
    </citation>
    <scope>IDENTIFICATION BY MASS SPECTROMETRY [LARGE SCALE ANALYSIS]</scope>
    <source>
        <tissue>Leukemic T-cell</tissue>
    </source>
</reference>
<reference key="30">
    <citation type="journal article" date="2010" name="FEBS Lett.">
        <title>Protein kinase C-related kinase targets nuclear localization signals in a subset of class IIa histone deacetylases.</title>
        <authorList>
            <person name="Harrison B.C."/>
            <person name="Huynh K."/>
            <person name="Lundgaard G.L."/>
            <person name="Helmke S.M."/>
            <person name="Perryman M.B."/>
            <person name="McKinsey T.A."/>
        </authorList>
    </citation>
    <scope>FUNCTION IN PHOSPHORYLATION OF HDAC5</scope>
    <scope>BIOPHYSICOCHEMICAL PROPERTIES</scope>
</reference>
<reference key="31">
    <citation type="journal article" date="2010" name="Sci. Signal.">
        <title>Quantitative phosphoproteomics reveals widespread full phosphorylation site occupancy during mitosis.</title>
        <authorList>
            <person name="Olsen J.V."/>
            <person name="Vermeulen M."/>
            <person name="Santamaria A."/>
            <person name="Kumar C."/>
            <person name="Miller M.L."/>
            <person name="Jensen L.J."/>
            <person name="Gnad F."/>
            <person name="Cox J."/>
            <person name="Jensen T.S."/>
            <person name="Nigg E.A."/>
            <person name="Brunak S."/>
            <person name="Mann M."/>
        </authorList>
    </citation>
    <scope>PHOSPHORYLATION [LARGE SCALE ANALYSIS] AT SER-302; SER-306; SER-360; SER-583 AND THR-958</scope>
    <scope>IDENTIFICATION BY MASS SPECTROMETRY [LARGE SCALE ANALYSIS]</scope>
    <source>
        <tissue>Cervix carcinoma</tissue>
    </source>
</reference>
<reference key="32">
    <citation type="journal article" date="2011" name="BMC Syst. Biol.">
        <title>Initial characterization of the human central proteome.</title>
        <authorList>
            <person name="Burkard T.R."/>
            <person name="Planyavsky M."/>
            <person name="Kaupe I."/>
            <person name="Breitwieser F.P."/>
            <person name="Buerckstuemmer T."/>
            <person name="Bennett K.L."/>
            <person name="Superti-Furga G."/>
            <person name="Colinge J."/>
        </authorList>
    </citation>
    <scope>IDENTIFICATION BY MASS SPECTROMETRY [LARGE SCALE ANALYSIS]</scope>
</reference>
<reference key="33">
    <citation type="journal article" date="2011" name="Mol. Cell. Biol.">
        <title>The Rho target PRK2 regulates apical junction formation in human bronchial epithelial cells.</title>
        <authorList>
            <person name="Wallace S.W."/>
            <person name="Magalhaes A."/>
            <person name="Hall A."/>
        </authorList>
    </citation>
    <scope>FUNCTION</scope>
    <scope>INTERACTION WITH RAC1; RHOA AND RHOC</scope>
    <scope>SUBCELLULAR LOCATION</scope>
</reference>
<reference key="34">
    <citation type="journal article" date="2011" name="PLoS ONE">
        <title>Regulatory domain selectivity in the cell-type specific PKN-dependence of cell migration.</title>
        <authorList>
            <person name="Lachmann S."/>
            <person name="Jevons A."/>
            <person name="De Rycker M."/>
            <person name="Casamassima A."/>
            <person name="Radtke S."/>
            <person name="Collazos A."/>
            <person name="Parker P.J."/>
        </authorList>
    </citation>
    <scope>FUNCTION IN CELL MIGRATION</scope>
    <scope>TISSUE SPECIFICITY</scope>
</reference>
<reference key="35">
    <citation type="journal article" date="2013" name="J. Proteome Res.">
        <title>Toward a comprehensive characterization of a human cancer cell phosphoproteome.</title>
        <authorList>
            <person name="Zhou H."/>
            <person name="Di Palma S."/>
            <person name="Preisinger C."/>
            <person name="Peng M."/>
            <person name="Polat A.N."/>
            <person name="Heck A.J."/>
            <person name="Mohammed S."/>
        </authorList>
    </citation>
    <scope>PHOSPHORYLATION [LARGE SCALE ANALYSIS] AT SER-21; SER-360; SER-583; THR-628 AND THR-958</scope>
    <scope>IDENTIFICATION BY MASS SPECTROMETRY [LARGE SCALE ANALYSIS]</scope>
    <source>
        <tissue>Cervix carcinoma</tissue>
        <tissue>Erythroleukemia</tissue>
    </source>
</reference>
<reference key="36">
    <citation type="journal article" date="2014" name="J. Proteomics">
        <title>An enzyme assisted RP-RPLC approach for in-depth analysis of human liver phosphoproteome.</title>
        <authorList>
            <person name="Bian Y."/>
            <person name="Song C."/>
            <person name="Cheng K."/>
            <person name="Dong M."/>
            <person name="Wang F."/>
            <person name="Huang J."/>
            <person name="Sun D."/>
            <person name="Wang L."/>
            <person name="Ye M."/>
            <person name="Zou H."/>
        </authorList>
    </citation>
    <scope>PHOSPHORYLATION [LARGE SCALE ANALYSIS] AT SER-952 AND THR-958</scope>
    <scope>IDENTIFICATION BY MASS SPECTROMETRY [LARGE SCALE ANALYSIS]</scope>
    <source>
        <tissue>Liver</tissue>
    </source>
</reference>
<reference key="37">
    <citation type="journal article" date="2016" name="Cell Cycle">
        <title>STAR syndrome-associated CDK10/Cyclin M regulates actin network architecture and ciliogenesis.</title>
        <authorList>
            <person name="Guen V.J."/>
            <person name="Gamble C."/>
            <person name="Perez D.E."/>
            <person name="Bourassa S."/>
            <person name="Zappel H."/>
            <person name="Gaertner J."/>
            <person name="Lees J.A."/>
            <person name="Colas P."/>
        </authorList>
    </citation>
    <scope>FUNCTION</scope>
    <scope>INTERACTION WITH CDK10</scope>
    <scope>PHOSPHORYLATION AT THR-121 AND THR-124 BY CDK10</scope>
    <scope>MUTAGENESIS OF THR-121 AND THR-124</scope>
</reference>
<protein>
    <recommendedName>
        <fullName>Serine/threonine-protein kinase N2</fullName>
        <ecNumber>2.7.11.13</ecNumber>
    </recommendedName>
    <alternativeName>
        <fullName>PKN gamma</fullName>
    </alternativeName>
    <alternativeName>
        <fullName>Protein kinase C-like 2</fullName>
    </alternativeName>
    <alternativeName>
        <fullName>Protein-kinase C-related kinase 2</fullName>
    </alternativeName>
</protein>
<dbReference type="EC" id="2.7.11.13"/>
<dbReference type="EMBL" id="U33052">
    <property type="protein sequence ID" value="AAC50208.1"/>
    <property type="molecule type" value="mRNA"/>
</dbReference>
<dbReference type="EMBL" id="S75548">
    <property type="protein sequence ID" value="AAB33346.1"/>
    <property type="molecule type" value="mRNA"/>
</dbReference>
<dbReference type="EMBL" id="AK298595">
    <property type="protein sequence ID" value="BAG60783.1"/>
    <property type="molecule type" value="mRNA"/>
</dbReference>
<dbReference type="EMBL" id="AK300304">
    <property type="protein sequence ID" value="BAG62057.1"/>
    <property type="molecule type" value="mRNA"/>
</dbReference>
<dbReference type="EMBL" id="AK301066">
    <property type="protein sequence ID" value="BAG62673.1"/>
    <property type="molecule type" value="mRNA"/>
</dbReference>
<dbReference type="EMBL" id="AC119426">
    <property type="status" value="NOT_ANNOTATED_CDS"/>
    <property type="molecule type" value="Genomic_DNA"/>
</dbReference>
<dbReference type="EMBL" id="AL136381">
    <property type="status" value="NOT_ANNOTATED_CDS"/>
    <property type="molecule type" value="Genomic_DNA"/>
</dbReference>
<dbReference type="EMBL" id="CH471097">
    <property type="protein sequence ID" value="EAW73161.1"/>
    <property type="molecule type" value="Genomic_DNA"/>
</dbReference>
<dbReference type="EMBL" id="CH471097">
    <property type="protein sequence ID" value="EAW73164.1"/>
    <property type="molecule type" value="Genomic_DNA"/>
</dbReference>
<dbReference type="EMBL" id="BC125199">
    <property type="protein sequence ID" value="AAI25200.1"/>
    <property type="molecule type" value="mRNA"/>
</dbReference>
<dbReference type="CCDS" id="CCDS714.1">
    <molecule id="Q16513-1"/>
</dbReference>
<dbReference type="CCDS" id="CCDS81350.1">
    <molecule id="Q16513-3"/>
</dbReference>
<dbReference type="PIR" id="S67527">
    <property type="entry name" value="S67527"/>
</dbReference>
<dbReference type="RefSeq" id="NP_001307636.1">
    <molecule id="Q16513-3"/>
    <property type="nucleotide sequence ID" value="NM_001320707.2"/>
</dbReference>
<dbReference type="RefSeq" id="NP_001307637.1">
    <molecule id="Q16513-4"/>
    <property type="nucleotide sequence ID" value="NM_001320708.2"/>
</dbReference>
<dbReference type="RefSeq" id="NP_001307638.1">
    <molecule id="Q16513-2"/>
    <property type="nucleotide sequence ID" value="NM_001320709.2"/>
</dbReference>
<dbReference type="RefSeq" id="NP_006247.1">
    <molecule id="Q16513-1"/>
    <property type="nucleotide sequence ID" value="NM_006256.4"/>
</dbReference>
<dbReference type="RefSeq" id="XP_011540074.1">
    <molecule id="Q16513-5"/>
    <property type="nucleotide sequence ID" value="XM_011541772.3"/>
</dbReference>
<dbReference type="RefSeq" id="XP_054193640.1">
    <molecule id="Q16513-5"/>
    <property type="nucleotide sequence ID" value="XM_054337665.1"/>
</dbReference>
<dbReference type="PDB" id="4CRS">
    <property type="method" value="X-ray"/>
    <property type="resolution" value="2.75 A"/>
    <property type="chains" value="A=646-984"/>
</dbReference>
<dbReference type="PDB" id="4RRV">
    <property type="method" value="X-ray"/>
    <property type="resolution" value="1.41 A"/>
    <property type="chains" value="B=969-983"/>
</dbReference>
<dbReference type="PDB" id="6CCY">
    <property type="method" value="X-ray"/>
    <property type="resolution" value="2.18 A"/>
    <property type="chains" value="A=969-983"/>
</dbReference>
<dbReference type="PDB" id="6GBE">
    <property type="method" value="NMR"/>
    <property type="chains" value="B=973-984"/>
</dbReference>
<dbReference type="PDBsum" id="4CRS"/>
<dbReference type="PDBsum" id="4RRV"/>
<dbReference type="PDBsum" id="6CCY"/>
<dbReference type="PDBsum" id="6GBE"/>
<dbReference type="SMR" id="Q16513"/>
<dbReference type="BioGRID" id="111572">
    <property type="interactions" value="212"/>
</dbReference>
<dbReference type="ELM" id="Q16513"/>
<dbReference type="FunCoup" id="Q16513">
    <property type="interactions" value="3098"/>
</dbReference>
<dbReference type="IntAct" id="Q16513">
    <property type="interactions" value="108"/>
</dbReference>
<dbReference type="MINT" id="Q16513"/>
<dbReference type="STRING" id="9606.ENSP00000359552"/>
<dbReference type="BindingDB" id="Q16513"/>
<dbReference type="ChEMBL" id="CHEMBL3032"/>
<dbReference type="DrugBank" id="DB12010">
    <property type="generic name" value="Fostamatinib"/>
</dbReference>
<dbReference type="DrugCentral" id="Q16513"/>
<dbReference type="GuidetoPHARMACOLOGY" id="1521"/>
<dbReference type="GlyGen" id="Q16513">
    <property type="glycosylation" value="2 sites, 1 N-linked glycan (1 site), 1 O-linked glycan (1 site)"/>
</dbReference>
<dbReference type="iPTMnet" id="Q16513"/>
<dbReference type="MetOSite" id="Q16513"/>
<dbReference type="PhosphoSitePlus" id="Q16513"/>
<dbReference type="BioMuta" id="PKN2"/>
<dbReference type="DMDM" id="6225859"/>
<dbReference type="CPTAC" id="CPTAC-3004"/>
<dbReference type="jPOST" id="Q16513"/>
<dbReference type="MassIVE" id="Q16513"/>
<dbReference type="PaxDb" id="9606-ENSP00000359552"/>
<dbReference type="PeptideAtlas" id="Q16513"/>
<dbReference type="ProteomicsDB" id="60880">
    <molecule id="Q16513-1"/>
</dbReference>
<dbReference type="ProteomicsDB" id="60881">
    <molecule id="Q16513-2"/>
</dbReference>
<dbReference type="ProteomicsDB" id="60882">
    <molecule id="Q16513-3"/>
</dbReference>
<dbReference type="ProteomicsDB" id="60883">
    <molecule id="Q16513-4"/>
</dbReference>
<dbReference type="ProteomicsDB" id="60884">
    <molecule id="Q16513-5"/>
</dbReference>
<dbReference type="Pumba" id="Q16513"/>
<dbReference type="Antibodypedia" id="33594">
    <property type="antibodies" value="258 antibodies from 34 providers"/>
</dbReference>
<dbReference type="DNASU" id="5586"/>
<dbReference type="Ensembl" id="ENST00000370513.9">
    <molecule id="Q16513-3"/>
    <property type="protein sequence ID" value="ENSP00000359544.5"/>
    <property type="gene ID" value="ENSG00000065243.20"/>
</dbReference>
<dbReference type="Ensembl" id="ENST00000370521.8">
    <molecule id="Q16513-1"/>
    <property type="protein sequence ID" value="ENSP00000359552.3"/>
    <property type="gene ID" value="ENSG00000065243.20"/>
</dbReference>
<dbReference type="GeneID" id="5586"/>
<dbReference type="KEGG" id="hsa:5586"/>
<dbReference type="MANE-Select" id="ENST00000370521.8">
    <property type="protein sequence ID" value="ENSP00000359552.3"/>
    <property type="RefSeq nucleotide sequence ID" value="NM_006256.4"/>
    <property type="RefSeq protein sequence ID" value="NP_006247.1"/>
</dbReference>
<dbReference type="UCSC" id="uc001dmn.4">
    <molecule id="Q16513-1"/>
    <property type="organism name" value="human"/>
</dbReference>
<dbReference type="AGR" id="HGNC:9406"/>
<dbReference type="CTD" id="5586"/>
<dbReference type="DisGeNET" id="5586"/>
<dbReference type="GeneCards" id="PKN2"/>
<dbReference type="HGNC" id="HGNC:9406">
    <property type="gene designation" value="PKN2"/>
</dbReference>
<dbReference type="HPA" id="ENSG00000065243">
    <property type="expression patterns" value="Low tissue specificity"/>
</dbReference>
<dbReference type="MIM" id="602549">
    <property type="type" value="gene"/>
</dbReference>
<dbReference type="neXtProt" id="NX_Q16513"/>
<dbReference type="OpenTargets" id="ENSG00000065243"/>
<dbReference type="PharmGKB" id="PA33770"/>
<dbReference type="VEuPathDB" id="HostDB:ENSG00000065243"/>
<dbReference type="eggNOG" id="KOG0694">
    <property type="taxonomic scope" value="Eukaryota"/>
</dbReference>
<dbReference type="GeneTree" id="ENSGT00940000154339"/>
<dbReference type="HOGENOM" id="CLU_000288_132_1_1"/>
<dbReference type="InParanoid" id="Q16513"/>
<dbReference type="OMA" id="ECIPEIA"/>
<dbReference type="OrthoDB" id="63267at2759"/>
<dbReference type="PAN-GO" id="Q16513">
    <property type="GO annotations" value="3 GO annotations based on evolutionary models"/>
</dbReference>
<dbReference type="PhylomeDB" id="Q16513"/>
<dbReference type="TreeFam" id="TF102005"/>
<dbReference type="BRENDA" id="2.7.11.13">
    <property type="organism ID" value="2681"/>
</dbReference>
<dbReference type="PathwayCommons" id="Q16513"/>
<dbReference type="Reactome" id="R-HSA-5625740">
    <property type="pathway name" value="RHO GTPases activate PKNs"/>
</dbReference>
<dbReference type="Reactome" id="R-HSA-8980692">
    <property type="pathway name" value="RHOA GTPase cycle"/>
</dbReference>
<dbReference type="Reactome" id="R-HSA-9013026">
    <property type="pathway name" value="RHOB GTPase cycle"/>
</dbReference>
<dbReference type="Reactome" id="R-HSA-9013106">
    <property type="pathway name" value="RHOC GTPase cycle"/>
</dbReference>
<dbReference type="Reactome" id="R-HSA-9013149">
    <property type="pathway name" value="RAC1 GTPase cycle"/>
</dbReference>
<dbReference type="Reactome" id="R-HSA-9856530">
    <property type="pathway name" value="High laminar flow shear stress activates signaling by PIEZO1 and PECAM1:CDH5:KDR in endothelial cells"/>
</dbReference>
<dbReference type="SABIO-RK" id="Q16513"/>
<dbReference type="SignaLink" id="Q16513"/>
<dbReference type="SIGNOR" id="Q16513"/>
<dbReference type="BioGRID-ORCS" id="5586">
    <property type="hits" value="178 hits in 1192 CRISPR screens"/>
</dbReference>
<dbReference type="ChiTaRS" id="PKN2">
    <property type="organism name" value="human"/>
</dbReference>
<dbReference type="EvolutionaryTrace" id="Q16513"/>
<dbReference type="GeneWiki" id="PKN2"/>
<dbReference type="GenomeRNAi" id="5586"/>
<dbReference type="Pharos" id="Q16513">
    <property type="development level" value="Tchem"/>
</dbReference>
<dbReference type="PRO" id="PR:Q16513"/>
<dbReference type="Proteomes" id="UP000005640">
    <property type="component" value="Chromosome 1"/>
</dbReference>
<dbReference type="RNAct" id="Q16513">
    <property type="molecule type" value="protein"/>
</dbReference>
<dbReference type="Bgee" id="ENSG00000065243">
    <property type="expression patterns" value="Expressed in tongue squamous epithelium and 215 other cell types or tissues"/>
</dbReference>
<dbReference type="ExpressionAtlas" id="Q16513">
    <property type="expression patterns" value="baseline and differential"/>
</dbReference>
<dbReference type="GO" id="GO:0043296">
    <property type="term" value="C:apical junction complex"/>
    <property type="evidence" value="ECO:0000314"/>
    <property type="project" value="UniProtKB"/>
</dbReference>
<dbReference type="GO" id="GO:0005813">
    <property type="term" value="C:centrosome"/>
    <property type="evidence" value="ECO:0000314"/>
    <property type="project" value="HPA"/>
</dbReference>
<dbReference type="GO" id="GO:0032154">
    <property type="term" value="C:cleavage furrow"/>
    <property type="evidence" value="ECO:0000314"/>
    <property type="project" value="UniProtKB"/>
</dbReference>
<dbReference type="GO" id="GO:0005737">
    <property type="term" value="C:cytoplasm"/>
    <property type="evidence" value="ECO:0000314"/>
    <property type="project" value="UniProtKB"/>
</dbReference>
<dbReference type="GO" id="GO:0005829">
    <property type="term" value="C:cytosol"/>
    <property type="evidence" value="ECO:0000314"/>
    <property type="project" value="HPA"/>
</dbReference>
<dbReference type="GO" id="GO:0045111">
    <property type="term" value="C:intermediate filament cytoskeleton"/>
    <property type="evidence" value="ECO:0000314"/>
    <property type="project" value="HPA"/>
</dbReference>
<dbReference type="GO" id="GO:0030027">
    <property type="term" value="C:lamellipodium"/>
    <property type="evidence" value="ECO:0000314"/>
    <property type="project" value="UniProtKB"/>
</dbReference>
<dbReference type="GO" id="GO:0030496">
    <property type="term" value="C:midbody"/>
    <property type="evidence" value="ECO:0000314"/>
    <property type="project" value="UniProtKB"/>
</dbReference>
<dbReference type="GO" id="GO:0016604">
    <property type="term" value="C:nuclear body"/>
    <property type="evidence" value="ECO:0000314"/>
    <property type="project" value="HPA"/>
</dbReference>
<dbReference type="GO" id="GO:0005654">
    <property type="term" value="C:nucleoplasm"/>
    <property type="evidence" value="ECO:0000314"/>
    <property type="project" value="HPA"/>
</dbReference>
<dbReference type="GO" id="GO:0005634">
    <property type="term" value="C:nucleus"/>
    <property type="evidence" value="ECO:0000314"/>
    <property type="project" value="UniProtKB"/>
</dbReference>
<dbReference type="GO" id="GO:0048471">
    <property type="term" value="C:perinuclear region of cytoplasm"/>
    <property type="evidence" value="ECO:0000314"/>
    <property type="project" value="AgBase"/>
</dbReference>
<dbReference type="GO" id="GO:0005886">
    <property type="term" value="C:plasma membrane"/>
    <property type="evidence" value="ECO:0000314"/>
    <property type="project" value="HPA"/>
</dbReference>
<dbReference type="GO" id="GO:0032991">
    <property type="term" value="C:protein-containing complex"/>
    <property type="evidence" value="ECO:0000314"/>
    <property type="project" value="MGI"/>
</dbReference>
<dbReference type="GO" id="GO:0005524">
    <property type="term" value="F:ATP binding"/>
    <property type="evidence" value="ECO:0007669"/>
    <property type="project" value="UniProtKB-KW"/>
</dbReference>
<dbReference type="GO" id="GO:0045296">
    <property type="term" value="F:cadherin binding"/>
    <property type="evidence" value="ECO:0007005"/>
    <property type="project" value="BHF-UCL"/>
</dbReference>
<dbReference type="GO" id="GO:0004697">
    <property type="term" value="F:diacylglycerol-dependent serine/threonine kinase activity"/>
    <property type="evidence" value="ECO:0007669"/>
    <property type="project" value="UniProtKB-EC"/>
</dbReference>
<dbReference type="GO" id="GO:0042826">
    <property type="term" value="F:histone deacetylase binding"/>
    <property type="evidence" value="ECO:0000314"/>
    <property type="project" value="UniProtKB"/>
</dbReference>
<dbReference type="GO" id="GO:0016301">
    <property type="term" value="F:kinase activity"/>
    <property type="evidence" value="ECO:0000314"/>
    <property type="project" value="AgBase"/>
</dbReference>
<dbReference type="GO" id="GO:0004672">
    <property type="term" value="F:protein kinase activity"/>
    <property type="evidence" value="ECO:0000304"/>
    <property type="project" value="ProtInc"/>
</dbReference>
<dbReference type="GO" id="GO:0106310">
    <property type="term" value="F:protein serine kinase activity"/>
    <property type="evidence" value="ECO:0000304"/>
    <property type="project" value="Reactome"/>
</dbReference>
<dbReference type="GO" id="GO:0004674">
    <property type="term" value="F:protein serine/threonine kinase activity"/>
    <property type="evidence" value="ECO:0000314"/>
    <property type="project" value="UniProtKB"/>
</dbReference>
<dbReference type="GO" id="GO:0004713">
    <property type="term" value="F:protein tyrosine kinase activity"/>
    <property type="evidence" value="ECO:0000304"/>
    <property type="project" value="Reactome"/>
</dbReference>
<dbReference type="GO" id="GO:0003723">
    <property type="term" value="F:RNA binding"/>
    <property type="evidence" value="ECO:0007005"/>
    <property type="project" value="UniProtKB"/>
</dbReference>
<dbReference type="GO" id="GO:0070063">
    <property type="term" value="F:RNA polymerase binding"/>
    <property type="evidence" value="ECO:0000353"/>
    <property type="project" value="AgBase"/>
</dbReference>
<dbReference type="GO" id="GO:0031267">
    <property type="term" value="F:small GTPase binding"/>
    <property type="evidence" value="ECO:0007669"/>
    <property type="project" value="InterPro"/>
</dbReference>
<dbReference type="GO" id="GO:0043297">
    <property type="term" value="P:apical junction assembly"/>
    <property type="evidence" value="ECO:0000315"/>
    <property type="project" value="UniProtKB"/>
</dbReference>
<dbReference type="GO" id="GO:0006915">
    <property type="term" value="P:apoptotic process"/>
    <property type="evidence" value="ECO:0007669"/>
    <property type="project" value="UniProtKB-KW"/>
</dbReference>
<dbReference type="GO" id="GO:0007155">
    <property type="term" value="P:cell adhesion"/>
    <property type="evidence" value="ECO:0007669"/>
    <property type="project" value="UniProtKB-KW"/>
</dbReference>
<dbReference type="GO" id="GO:0051301">
    <property type="term" value="P:cell division"/>
    <property type="evidence" value="ECO:0007669"/>
    <property type="project" value="UniProtKB-KW"/>
</dbReference>
<dbReference type="GO" id="GO:0030030">
    <property type="term" value="P:cell projection organization"/>
    <property type="evidence" value="ECO:0007669"/>
    <property type="project" value="UniProtKB-KW"/>
</dbReference>
<dbReference type="GO" id="GO:0010631">
    <property type="term" value="P:epithelial cell migration"/>
    <property type="evidence" value="ECO:0000314"/>
    <property type="project" value="UniProtKB"/>
</dbReference>
<dbReference type="GO" id="GO:0035556">
    <property type="term" value="P:intracellular signal transduction"/>
    <property type="evidence" value="ECO:0000318"/>
    <property type="project" value="GO_Central"/>
</dbReference>
<dbReference type="GO" id="GO:0032467">
    <property type="term" value="P:positive regulation of cytokinesis"/>
    <property type="evidence" value="ECO:0000315"/>
    <property type="project" value="UniProtKB"/>
</dbReference>
<dbReference type="GO" id="GO:0045931">
    <property type="term" value="P:positive regulation of mitotic cell cycle"/>
    <property type="evidence" value="ECO:0000315"/>
    <property type="project" value="UniProtKB"/>
</dbReference>
<dbReference type="GO" id="GO:0045070">
    <property type="term" value="P:positive regulation of viral genome replication"/>
    <property type="evidence" value="ECO:0000315"/>
    <property type="project" value="AgBase"/>
</dbReference>
<dbReference type="GO" id="GO:0006468">
    <property type="term" value="P:protein phosphorylation"/>
    <property type="evidence" value="ECO:0000314"/>
    <property type="project" value="UniProtKB"/>
</dbReference>
<dbReference type="GO" id="GO:2000145">
    <property type="term" value="P:regulation of cell motility"/>
    <property type="evidence" value="ECO:0000315"/>
    <property type="project" value="UniProtKB"/>
</dbReference>
<dbReference type="GO" id="GO:0007165">
    <property type="term" value="P:signal transduction"/>
    <property type="evidence" value="ECO:0000304"/>
    <property type="project" value="ProtInc"/>
</dbReference>
<dbReference type="GO" id="GO:0097700">
    <property type="term" value="P:vascular endothelial cell response to laminar fluid shear stress"/>
    <property type="evidence" value="ECO:0000304"/>
    <property type="project" value="Reactome"/>
</dbReference>
<dbReference type="CDD" id="cd08687">
    <property type="entry name" value="C2_PKN-like"/>
    <property type="match status" value="1"/>
</dbReference>
<dbReference type="CDD" id="cd11635">
    <property type="entry name" value="HR1_PKN2_3"/>
    <property type="match status" value="1"/>
</dbReference>
<dbReference type="CDD" id="cd11622">
    <property type="entry name" value="HR1_PKN_1"/>
    <property type="match status" value="1"/>
</dbReference>
<dbReference type="CDD" id="cd05589">
    <property type="entry name" value="STKc_PKN"/>
    <property type="match status" value="1"/>
</dbReference>
<dbReference type="FunFam" id="1.10.287.160:FF:000001">
    <property type="entry name" value="Putative serine/threonine-protein kinase N2"/>
    <property type="match status" value="1"/>
</dbReference>
<dbReference type="FunFam" id="1.10.287.160:FF:000002">
    <property type="entry name" value="Putative serine/threonine-protein kinase N2"/>
    <property type="match status" value="1"/>
</dbReference>
<dbReference type="FunFam" id="1.10.287.160:FF:000003">
    <property type="entry name" value="Putative serine/threonine-protein kinase N2"/>
    <property type="match status" value="1"/>
</dbReference>
<dbReference type="FunFam" id="3.30.200.20:FF:000478">
    <property type="entry name" value="Serine/threonine-protein kinase N2"/>
    <property type="match status" value="1"/>
</dbReference>
<dbReference type="FunFam" id="1.10.510.10:FF:000038">
    <property type="entry name" value="serine/threonine-protein kinase N2 isoform X1"/>
    <property type="match status" value="1"/>
</dbReference>
<dbReference type="Gene3D" id="2.60.40.150">
    <property type="entry name" value="C2 domain"/>
    <property type="match status" value="1"/>
</dbReference>
<dbReference type="Gene3D" id="1.10.287.160">
    <property type="entry name" value="HR1 repeat"/>
    <property type="match status" value="3"/>
</dbReference>
<dbReference type="Gene3D" id="3.30.200.20">
    <property type="entry name" value="Phosphorylase Kinase, domain 1"/>
    <property type="match status" value="1"/>
</dbReference>
<dbReference type="Gene3D" id="1.10.510.10">
    <property type="entry name" value="Transferase(Phosphotransferase) domain 1"/>
    <property type="match status" value="1"/>
</dbReference>
<dbReference type="InterPro" id="IPR000961">
    <property type="entry name" value="AGC-kinase_C"/>
</dbReference>
<dbReference type="InterPro" id="IPR000008">
    <property type="entry name" value="C2_dom"/>
</dbReference>
<dbReference type="InterPro" id="IPR035892">
    <property type="entry name" value="C2_domain_sf"/>
</dbReference>
<dbReference type="InterPro" id="IPR037784">
    <property type="entry name" value="C2_PKN"/>
</dbReference>
<dbReference type="InterPro" id="IPR011072">
    <property type="entry name" value="HR1_rho-bd"/>
</dbReference>
<dbReference type="InterPro" id="IPR036274">
    <property type="entry name" value="HR1_rpt_sf"/>
</dbReference>
<dbReference type="InterPro" id="IPR011009">
    <property type="entry name" value="Kinase-like_dom_sf"/>
</dbReference>
<dbReference type="InterPro" id="IPR017892">
    <property type="entry name" value="Pkinase_C"/>
</dbReference>
<dbReference type="InterPro" id="IPR037313">
    <property type="entry name" value="PKN_HR1_1"/>
</dbReference>
<dbReference type="InterPro" id="IPR000719">
    <property type="entry name" value="Prot_kinase_dom"/>
</dbReference>
<dbReference type="InterPro" id="IPR017441">
    <property type="entry name" value="Protein_kinase_ATP_BS"/>
</dbReference>
<dbReference type="InterPro" id="IPR008271">
    <property type="entry name" value="Ser/Thr_kinase_AS"/>
</dbReference>
<dbReference type="PANTHER" id="PTHR24351">
    <property type="entry name" value="RIBOSOMAL PROTEIN S6 KINASE"/>
    <property type="match status" value="1"/>
</dbReference>
<dbReference type="Pfam" id="PF02185">
    <property type="entry name" value="HR1"/>
    <property type="match status" value="3"/>
</dbReference>
<dbReference type="Pfam" id="PF00069">
    <property type="entry name" value="Pkinase"/>
    <property type="match status" value="1"/>
</dbReference>
<dbReference type="Pfam" id="PF00433">
    <property type="entry name" value="Pkinase_C"/>
    <property type="match status" value="1"/>
</dbReference>
<dbReference type="SMART" id="SM00239">
    <property type="entry name" value="C2"/>
    <property type="match status" value="1"/>
</dbReference>
<dbReference type="SMART" id="SM00742">
    <property type="entry name" value="Hr1"/>
    <property type="match status" value="3"/>
</dbReference>
<dbReference type="SMART" id="SM00133">
    <property type="entry name" value="S_TK_X"/>
    <property type="match status" value="1"/>
</dbReference>
<dbReference type="SMART" id="SM00220">
    <property type="entry name" value="S_TKc"/>
    <property type="match status" value="1"/>
</dbReference>
<dbReference type="SUPFAM" id="SSF49562">
    <property type="entry name" value="C2 domain (Calcium/lipid-binding domain, CaLB)"/>
    <property type="match status" value="1"/>
</dbReference>
<dbReference type="SUPFAM" id="SSF46585">
    <property type="entry name" value="HR1 repeat"/>
    <property type="match status" value="3"/>
</dbReference>
<dbReference type="SUPFAM" id="SSF56112">
    <property type="entry name" value="Protein kinase-like (PK-like)"/>
    <property type="match status" value="1"/>
</dbReference>
<dbReference type="PROSITE" id="PS51285">
    <property type="entry name" value="AGC_KINASE_CTER"/>
    <property type="match status" value="1"/>
</dbReference>
<dbReference type="PROSITE" id="PS50004">
    <property type="entry name" value="C2"/>
    <property type="match status" value="1"/>
</dbReference>
<dbReference type="PROSITE" id="PS00107">
    <property type="entry name" value="PROTEIN_KINASE_ATP"/>
    <property type="match status" value="1"/>
</dbReference>
<dbReference type="PROSITE" id="PS50011">
    <property type="entry name" value="PROTEIN_KINASE_DOM"/>
    <property type="match status" value="1"/>
</dbReference>
<dbReference type="PROSITE" id="PS00108">
    <property type="entry name" value="PROTEIN_KINASE_ST"/>
    <property type="match status" value="1"/>
</dbReference>
<dbReference type="PROSITE" id="PS51860">
    <property type="entry name" value="REM_1"/>
    <property type="match status" value="3"/>
</dbReference>
<gene>
    <name type="primary">PKN2</name>
    <name type="synonym">PRK2</name>
    <name type="synonym">PRKCL2</name>
</gene>
<keyword id="KW-0002">3D-structure</keyword>
<keyword id="KW-0007">Acetylation</keyword>
<keyword id="KW-0025">Alternative splicing</keyword>
<keyword id="KW-0053">Apoptosis</keyword>
<keyword id="KW-0067">ATP-binding</keyword>
<keyword id="KW-0130">Cell adhesion</keyword>
<keyword id="KW-0131">Cell cycle</keyword>
<keyword id="KW-0132">Cell division</keyword>
<keyword id="KW-0965">Cell junction</keyword>
<keyword id="KW-0966">Cell projection</keyword>
<keyword id="KW-0970">Cilium biogenesis/degradation</keyword>
<keyword id="KW-0175">Coiled coil</keyword>
<keyword id="KW-0963">Cytoplasm</keyword>
<keyword id="KW-0206">Cytoskeleton</keyword>
<keyword id="KW-0945">Host-virus interaction</keyword>
<keyword id="KW-0418">Kinase</keyword>
<keyword id="KW-0472">Membrane</keyword>
<keyword id="KW-0547">Nucleotide-binding</keyword>
<keyword id="KW-0539">Nucleus</keyword>
<keyword id="KW-0597">Phosphoprotein</keyword>
<keyword id="KW-1267">Proteomics identification</keyword>
<keyword id="KW-1185">Reference proteome</keyword>
<keyword id="KW-0677">Repeat</keyword>
<keyword id="KW-0723">Serine/threonine-protein kinase</keyword>
<keyword id="KW-0804">Transcription</keyword>
<keyword id="KW-0805">Transcription regulation</keyword>
<keyword id="KW-0808">Transferase</keyword>
<evidence type="ECO:0000250" key="1"/>
<evidence type="ECO:0000250" key="2">
    <source>
        <dbReference type="UniProtKB" id="Q8BWW9"/>
    </source>
</evidence>
<evidence type="ECO:0000255" key="3">
    <source>
        <dbReference type="PROSITE-ProRule" id="PRU00041"/>
    </source>
</evidence>
<evidence type="ECO:0000255" key="4">
    <source>
        <dbReference type="PROSITE-ProRule" id="PRU00159"/>
    </source>
</evidence>
<evidence type="ECO:0000255" key="5">
    <source>
        <dbReference type="PROSITE-ProRule" id="PRU00618"/>
    </source>
</evidence>
<evidence type="ECO:0000255" key="6">
    <source>
        <dbReference type="PROSITE-ProRule" id="PRU01207"/>
    </source>
</evidence>
<evidence type="ECO:0000255" key="7">
    <source>
        <dbReference type="PROSITE-ProRule" id="PRU10027"/>
    </source>
</evidence>
<evidence type="ECO:0000256" key="8">
    <source>
        <dbReference type="SAM" id="MobiDB-lite"/>
    </source>
</evidence>
<evidence type="ECO:0000269" key="9">
    <source>
    </source>
</evidence>
<evidence type="ECO:0000269" key="10">
    <source>
    </source>
</evidence>
<evidence type="ECO:0000269" key="11">
    <source>
    </source>
</evidence>
<evidence type="ECO:0000269" key="12">
    <source>
    </source>
</evidence>
<evidence type="ECO:0000269" key="13">
    <source>
    </source>
</evidence>
<evidence type="ECO:0000269" key="14">
    <source>
    </source>
</evidence>
<evidence type="ECO:0000269" key="15">
    <source>
    </source>
</evidence>
<evidence type="ECO:0000269" key="16">
    <source>
    </source>
</evidence>
<evidence type="ECO:0000269" key="17">
    <source>
    </source>
</evidence>
<evidence type="ECO:0000269" key="18">
    <source>
    </source>
</evidence>
<evidence type="ECO:0000269" key="19">
    <source>
    </source>
</evidence>
<evidence type="ECO:0000269" key="20">
    <source>
    </source>
</evidence>
<evidence type="ECO:0000269" key="21">
    <source>
    </source>
</evidence>
<evidence type="ECO:0000269" key="22">
    <source>
    </source>
</evidence>
<evidence type="ECO:0000269" key="23">
    <source>
    </source>
</evidence>
<evidence type="ECO:0000269" key="24">
    <source>
    </source>
</evidence>
<evidence type="ECO:0000269" key="25">
    <source>
    </source>
</evidence>
<evidence type="ECO:0000269" key="26">
    <source>
    </source>
</evidence>
<evidence type="ECO:0000303" key="27">
    <source>
    </source>
</evidence>
<evidence type="ECO:0000303" key="28">
    <source>
    </source>
</evidence>
<evidence type="ECO:0000305" key="29"/>
<evidence type="ECO:0007744" key="30">
    <source>
    </source>
</evidence>
<evidence type="ECO:0007744" key="31">
    <source>
    </source>
</evidence>
<evidence type="ECO:0007744" key="32">
    <source>
    </source>
</evidence>
<evidence type="ECO:0007744" key="33">
    <source>
    </source>
</evidence>
<evidence type="ECO:0007744" key="34">
    <source>
    </source>
</evidence>
<evidence type="ECO:0007744" key="35">
    <source>
    </source>
</evidence>
<evidence type="ECO:0007744" key="36">
    <source>
    </source>
</evidence>
<evidence type="ECO:0007829" key="37">
    <source>
        <dbReference type="PDB" id="4CRS"/>
    </source>
</evidence>
<evidence type="ECO:0007829" key="38">
    <source>
        <dbReference type="PDB" id="6CCY"/>
    </source>
</evidence>